<sequence length="473" mass="52546">MSFSRRQFIQVSGLAMCIGAAPLLVRASKNQQTALPVPPLLESRGGQPLFLTLQKAHWTFDGQYKTSVWGINGQYLGPTIRVHKNDDVKLIYSNRLAEPVSMTVSGLQLPGTLTGGVARQISPGSDWSPVLPIRQQAATCWYHANTPNRMAPHVYKGLAGMWLVEDETSRHLPLPKHYGVNDFPVILQDKRLDNFGVPEYQPASDSGFIGNTLLVNGVQNPFIEVSRGWIRLRLLNASNARRYQLQIGDGRPFYMIGTDLGLLPAPIAVQQLSLAPGERREVLIDMSKEDEVVVTAGESAGVLDKLRGLFEPSTVLISSTVLTIKATGLLSLVTDNLPSRLIDDVTPVSSVIRNREIYLDDNTPGINGALWDMNRVDITSQQGTWERWIVNASAPQPFHIEGVQFKLINHNGEAPQPQDYGWKDTVWVDGRVELLVYMNQPSYEHFPFLYYSQILEMADRGSVGQLVTIPVNQ</sequence>
<organism>
    <name type="scientific">Photorhabdus laumondii subsp. laumondii (strain DSM 15139 / CIP 105565 / TT01)</name>
    <name type="common">Photorhabdus luminescens subsp. laumondii</name>
    <dbReference type="NCBI Taxonomy" id="243265"/>
    <lineage>
        <taxon>Bacteria</taxon>
        <taxon>Pseudomonadati</taxon>
        <taxon>Pseudomonadota</taxon>
        <taxon>Gammaproteobacteria</taxon>
        <taxon>Enterobacterales</taxon>
        <taxon>Morganellaceae</taxon>
        <taxon>Photorhabdus</taxon>
    </lineage>
</organism>
<proteinExistence type="inferred from homology"/>
<reference key="1">
    <citation type="journal article" date="2003" name="Nat. Biotechnol.">
        <title>The genome sequence of the entomopathogenic bacterium Photorhabdus luminescens.</title>
        <authorList>
            <person name="Duchaud E."/>
            <person name="Rusniok C."/>
            <person name="Frangeul L."/>
            <person name="Buchrieser C."/>
            <person name="Givaudan A."/>
            <person name="Taourit S."/>
            <person name="Bocs S."/>
            <person name="Boursaux-Eude C."/>
            <person name="Chandler M."/>
            <person name="Charles J.-F."/>
            <person name="Dassa E."/>
            <person name="Derose R."/>
            <person name="Derzelle S."/>
            <person name="Freyssinet G."/>
            <person name="Gaudriault S."/>
            <person name="Medigue C."/>
            <person name="Lanois A."/>
            <person name="Powell K."/>
            <person name="Siguier P."/>
            <person name="Vincent R."/>
            <person name="Wingate V."/>
            <person name="Zouine M."/>
            <person name="Glaser P."/>
            <person name="Boemare N."/>
            <person name="Danchin A."/>
            <person name="Kunst F."/>
        </authorList>
    </citation>
    <scope>NUCLEOTIDE SEQUENCE [LARGE SCALE GENOMIC DNA]</scope>
    <source>
        <strain>DSM 15139 / CIP 105565 / TT01</strain>
    </source>
</reference>
<dbReference type="EMBL" id="BX571872">
    <property type="protein sequence ID" value="CAE16319.1"/>
    <property type="molecule type" value="Genomic_DNA"/>
</dbReference>
<dbReference type="RefSeq" id="WP_011148081.1">
    <property type="nucleotide sequence ID" value="NC_005126.1"/>
</dbReference>
<dbReference type="SMR" id="Q7N0E3"/>
<dbReference type="STRING" id="243265.plu3947"/>
<dbReference type="GeneID" id="48850174"/>
<dbReference type="KEGG" id="plu:plu3947"/>
<dbReference type="eggNOG" id="COG2132">
    <property type="taxonomic scope" value="Bacteria"/>
</dbReference>
<dbReference type="HOGENOM" id="CLU_009100_2_4_6"/>
<dbReference type="OrthoDB" id="9757546at2"/>
<dbReference type="Proteomes" id="UP000002514">
    <property type="component" value="Chromosome"/>
</dbReference>
<dbReference type="GO" id="GO:0032153">
    <property type="term" value="C:cell division site"/>
    <property type="evidence" value="ECO:0007669"/>
    <property type="project" value="UniProtKB-UniRule"/>
</dbReference>
<dbReference type="GO" id="GO:0030288">
    <property type="term" value="C:outer membrane-bounded periplasmic space"/>
    <property type="evidence" value="ECO:0007669"/>
    <property type="project" value="UniProtKB-UniRule"/>
</dbReference>
<dbReference type="GO" id="GO:0005507">
    <property type="term" value="F:copper ion binding"/>
    <property type="evidence" value="ECO:0007669"/>
    <property type="project" value="InterPro"/>
</dbReference>
<dbReference type="GO" id="GO:0016491">
    <property type="term" value="F:oxidoreductase activity"/>
    <property type="evidence" value="ECO:0007669"/>
    <property type="project" value="InterPro"/>
</dbReference>
<dbReference type="GO" id="GO:0043093">
    <property type="term" value="P:FtsZ-dependent cytokinesis"/>
    <property type="evidence" value="ECO:0007669"/>
    <property type="project" value="UniProtKB-UniRule"/>
</dbReference>
<dbReference type="CDD" id="cd13867">
    <property type="entry name" value="CuRO_2_CueO_FtsP"/>
    <property type="match status" value="1"/>
</dbReference>
<dbReference type="CDD" id="cd13890">
    <property type="entry name" value="CuRO_3_CueO_FtsP"/>
    <property type="match status" value="1"/>
</dbReference>
<dbReference type="Gene3D" id="2.60.40.420">
    <property type="entry name" value="Cupredoxins - blue copper proteins"/>
    <property type="match status" value="3"/>
</dbReference>
<dbReference type="HAMAP" id="MF_00915">
    <property type="entry name" value="FtsP"/>
    <property type="match status" value="1"/>
</dbReference>
<dbReference type="InterPro" id="IPR011707">
    <property type="entry name" value="Cu-oxidase-like_N"/>
</dbReference>
<dbReference type="InterPro" id="IPR011706">
    <property type="entry name" value="Cu-oxidase_C"/>
</dbReference>
<dbReference type="InterPro" id="IPR045087">
    <property type="entry name" value="Cu-oxidase_fam"/>
</dbReference>
<dbReference type="InterPro" id="IPR008972">
    <property type="entry name" value="Cupredoxin"/>
</dbReference>
<dbReference type="InterPro" id="IPR026589">
    <property type="entry name" value="FtsP"/>
</dbReference>
<dbReference type="InterPro" id="IPR006311">
    <property type="entry name" value="TAT_signal"/>
</dbReference>
<dbReference type="NCBIfam" id="NF008135">
    <property type="entry name" value="PRK10883.1"/>
    <property type="match status" value="1"/>
</dbReference>
<dbReference type="PANTHER" id="PTHR48267:SF1">
    <property type="entry name" value="BILIRUBIN OXIDASE"/>
    <property type="match status" value="1"/>
</dbReference>
<dbReference type="PANTHER" id="PTHR48267">
    <property type="entry name" value="CUPREDOXIN SUPERFAMILY PROTEIN"/>
    <property type="match status" value="1"/>
</dbReference>
<dbReference type="Pfam" id="PF07731">
    <property type="entry name" value="Cu-oxidase_2"/>
    <property type="match status" value="1"/>
</dbReference>
<dbReference type="Pfam" id="PF07732">
    <property type="entry name" value="Cu-oxidase_3"/>
    <property type="match status" value="1"/>
</dbReference>
<dbReference type="SUPFAM" id="SSF49503">
    <property type="entry name" value="Cupredoxins"/>
    <property type="match status" value="3"/>
</dbReference>
<dbReference type="PROSITE" id="PS51318">
    <property type="entry name" value="TAT"/>
    <property type="match status" value="1"/>
</dbReference>
<gene>
    <name evidence="1" type="primary">ftsP</name>
    <name type="ordered locus">plu3947</name>
</gene>
<feature type="signal peptide" description="Tat-type signal" evidence="1">
    <location>
        <begin position="1"/>
        <end position="27"/>
    </location>
</feature>
<feature type="chain" id="PRO_0000416012" description="Cell division protein FtsP">
    <location>
        <begin position="28"/>
        <end position="473"/>
    </location>
</feature>
<evidence type="ECO:0000255" key="1">
    <source>
        <dbReference type="HAMAP-Rule" id="MF_00915"/>
    </source>
</evidence>
<keyword id="KW-0131">Cell cycle</keyword>
<keyword id="KW-0132">Cell division</keyword>
<keyword id="KW-0574">Periplasm</keyword>
<keyword id="KW-1185">Reference proteome</keyword>
<keyword id="KW-0732">Signal</keyword>
<accession>Q7N0E3</accession>
<protein>
    <recommendedName>
        <fullName evidence="1">Cell division protein FtsP</fullName>
    </recommendedName>
</protein>
<name>FTSP_PHOLL</name>
<comment type="function">
    <text evidence="1">Cell division protein that is required for growth during stress conditions. May be involved in protecting or stabilizing the divisomal assembly under conditions of stress.</text>
</comment>
<comment type="subcellular location">
    <subcellularLocation>
        <location evidence="1">Periplasm</location>
    </subcellularLocation>
    <text evidence="1">Localizes to the division septum.</text>
</comment>
<comment type="PTM">
    <text>Predicted to be exported by the Tat system. The position of the signal peptide cleavage has not been experimentally proven.</text>
</comment>
<comment type="similarity">
    <text evidence="1">Belongs to the FtsP family.</text>
</comment>